<dbReference type="EMBL" id="AF041468">
    <property type="protein sequence ID" value="AAC35662.1"/>
    <property type="molecule type" value="Genomic_DNA"/>
</dbReference>
<dbReference type="RefSeq" id="NP_050728.1">
    <property type="nucleotide sequence ID" value="NC_000926.1"/>
</dbReference>
<dbReference type="SMR" id="O78471"/>
<dbReference type="GeneID" id="857032"/>
<dbReference type="HOGENOM" id="CLU_212150_0_0_1"/>
<dbReference type="GO" id="GO:0009535">
    <property type="term" value="C:chloroplast thylakoid membrane"/>
    <property type="evidence" value="ECO:0007669"/>
    <property type="project" value="UniProtKB-SubCell"/>
</dbReference>
<dbReference type="GO" id="GO:0009539">
    <property type="term" value="C:photosystem II reaction center"/>
    <property type="evidence" value="ECO:0007669"/>
    <property type="project" value="InterPro"/>
</dbReference>
<dbReference type="GO" id="GO:0015979">
    <property type="term" value="P:photosynthesis"/>
    <property type="evidence" value="ECO:0007669"/>
    <property type="project" value="UniProtKB-UniRule"/>
</dbReference>
<dbReference type="HAMAP" id="MF_01316">
    <property type="entry name" value="PSII_PsbI"/>
    <property type="match status" value="1"/>
</dbReference>
<dbReference type="InterPro" id="IPR003686">
    <property type="entry name" value="PSII_PsbI"/>
</dbReference>
<dbReference type="InterPro" id="IPR037271">
    <property type="entry name" value="PSII_PsbI_sf"/>
</dbReference>
<dbReference type="NCBIfam" id="NF002735">
    <property type="entry name" value="PRK02655.1"/>
    <property type="match status" value="1"/>
</dbReference>
<dbReference type="PANTHER" id="PTHR35772">
    <property type="entry name" value="PHOTOSYSTEM II REACTION CENTER PROTEIN I"/>
    <property type="match status" value="1"/>
</dbReference>
<dbReference type="PANTHER" id="PTHR35772:SF1">
    <property type="entry name" value="PHOTOSYSTEM II REACTION CENTER PROTEIN I"/>
    <property type="match status" value="1"/>
</dbReference>
<dbReference type="Pfam" id="PF02532">
    <property type="entry name" value="PsbI"/>
    <property type="match status" value="1"/>
</dbReference>
<dbReference type="SUPFAM" id="SSF161041">
    <property type="entry name" value="Photosystem II reaction center protein I, PsbI"/>
    <property type="match status" value="1"/>
</dbReference>
<feature type="chain" id="PRO_0000219628" description="Photosystem II reaction center protein I">
    <location>
        <begin position="1"/>
        <end position="38"/>
    </location>
</feature>
<feature type="transmembrane region" description="Helical" evidence="1">
    <location>
        <begin position="6"/>
        <end position="25"/>
    </location>
</feature>
<comment type="function">
    <text evidence="1">One of the components of the core complex of photosystem II (PSII), required for its stability and/or assembly. PSII is a light-driven water:plastoquinone oxidoreductase that uses light energy to abstract electrons from H(2)O, generating O(2) and a proton gradient subsequently used for ATP formation. It consists of a core antenna complex that captures photons, and an electron transfer chain that converts photonic excitation into a charge separation.</text>
</comment>
<comment type="subunit">
    <text evidence="1">PSII is composed of 1 copy each of membrane proteins PsbA, PsbB, PsbC, PsbD, PsbE, PsbF, PsbH, PsbI, PsbJ, PsbK, PsbL, PsbM, PsbT, PsbX, PsbY, PsbZ, Psb30/Ycf12, at least 3 peripheral proteins of the oxygen-evolving complex and a large number of cofactors. It forms dimeric complexes.</text>
</comment>
<comment type="subcellular location">
    <subcellularLocation>
        <location evidence="1">Plastid</location>
        <location evidence="1">Chloroplast thylakoid membrane</location>
        <topology evidence="1">Single-pass membrane protein</topology>
    </subcellularLocation>
</comment>
<comment type="similarity">
    <text evidence="1">Belongs to the PsbI family.</text>
</comment>
<protein>
    <recommendedName>
        <fullName evidence="1">Photosystem II reaction center protein I</fullName>
        <shortName evidence="1">PSII-I</shortName>
    </recommendedName>
    <alternativeName>
        <fullName evidence="1">PSII 4.8 kDa protein</fullName>
    </alternativeName>
</protein>
<gene>
    <name evidence="1" type="primary">psbI</name>
</gene>
<name>PSBI_GUITH</name>
<reference key="1">
    <citation type="journal article" date="1999" name="J. Mol. Evol.">
        <title>The plastid genome of the cryptophyte alga, Guillardia theta: complete sequence and conserved synteny groups confirm its common ancestry with red algae.</title>
        <authorList>
            <person name="Douglas S.E."/>
            <person name="Penny S.L."/>
        </authorList>
    </citation>
    <scope>NUCLEOTIDE SEQUENCE [LARGE SCALE GENOMIC DNA]</scope>
</reference>
<proteinExistence type="inferred from homology"/>
<sequence>MFTLKIVVYTTVTFFVSLFTFGFLSNDASRNPNRKDLE</sequence>
<keyword id="KW-0150">Chloroplast</keyword>
<keyword id="KW-0472">Membrane</keyword>
<keyword id="KW-0602">Photosynthesis</keyword>
<keyword id="KW-0604">Photosystem II</keyword>
<keyword id="KW-0934">Plastid</keyword>
<keyword id="KW-0674">Reaction center</keyword>
<keyword id="KW-0793">Thylakoid</keyword>
<keyword id="KW-0812">Transmembrane</keyword>
<keyword id="KW-1133">Transmembrane helix</keyword>
<organism>
    <name type="scientific">Guillardia theta</name>
    <name type="common">Cryptophyte</name>
    <name type="synonym">Cryptomonas phi</name>
    <dbReference type="NCBI Taxonomy" id="55529"/>
    <lineage>
        <taxon>Eukaryota</taxon>
        <taxon>Cryptophyceae</taxon>
        <taxon>Pyrenomonadales</taxon>
        <taxon>Geminigeraceae</taxon>
        <taxon>Guillardia</taxon>
    </lineage>
</organism>
<accession>O78471</accession>
<evidence type="ECO:0000255" key="1">
    <source>
        <dbReference type="HAMAP-Rule" id="MF_01316"/>
    </source>
</evidence>
<geneLocation type="chloroplast"/>